<protein>
    <recommendedName>
        <fullName>Stage II sporulation protein SB</fullName>
    </recommendedName>
    <alternativeName>
        <fullName>Antidote protein SpoIISB</fullName>
    </alternativeName>
    <alternativeName>
        <fullName>Antitoxin SpoIISB</fullName>
    </alternativeName>
</protein>
<name>SP2SB_BACCR</name>
<comment type="function">
    <text evidence="1">Antitoxin component of a type II toxin-antitoxin (TA) system. Antitoxin that binds toxin SpoIISA and neutralizes its toxic activity. Upon coexpression with SpoIISA in E.coli normal growth is restored.</text>
</comment>
<comment type="subunit">
    <text>Probably forms a complex with SpoIISA neutralizing its toxic activity.</text>
</comment>
<comment type="similarity">
    <text evidence="2">Belongs to the SpoIISB antitoxin family.</text>
</comment>
<reference key="1">
    <citation type="journal article" date="2003" name="Nature">
        <title>Genome sequence of Bacillus cereus and comparative analysis with Bacillus anthracis.</title>
        <authorList>
            <person name="Ivanova N."/>
            <person name="Sorokin A."/>
            <person name="Anderson I."/>
            <person name="Galleron N."/>
            <person name="Candelon B."/>
            <person name="Kapatral V."/>
            <person name="Bhattacharyya A."/>
            <person name="Reznik G."/>
            <person name="Mikhailova N."/>
            <person name="Lapidus A."/>
            <person name="Chu L."/>
            <person name="Mazur M."/>
            <person name="Goltsman E."/>
            <person name="Larsen N."/>
            <person name="D'Souza M."/>
            <person name="Walunas T."/>
            <person name="Grechkin Y."/>
            <person name="Pusch G."/>
            <person name="Haselkorn R."/>
            <person name="Fonstein M."/>
            <person name="Ehrlich S.D."/>
            <person name="Overbeek R."/>
            <person name="Kyrpides N.C."/>
        </authorList>
    </citation>
    <scope>NUCLEOTIDE SEQUENCE [LARGE SCALE GENOMIC DNA]</scope>
    <source>
        <strain>ATCC 14579 / DSM 31 / CCUG 7414 / JCM 2152 / NBRC 15305 / NCIMB 9373 / NCTC 2599 / NRRL B-3711</strain>
    </source>
</reference>
<reference key="2">
    <citation type="journal article" date="2008" name="FEMS Microbiol. Lett.">
        <title>Expression of functional Bacillus SpoIISAB toxin-antitoxin modules in Escherichia coli.</title>
        <authorList>
            <person name="Florek P."/>
            <person name="Muchova K."/>
            <person name="Pavelcikova P."/>
            <person name="Barak I."/>
        </authorList>
    </citation>
    <scope>FUNCTION AS AN ANTITOXIN</scope>
    <scope>EXPRESSION IN E.COLI</scope>
    <source>
        <strain>ATCC 14579 / DSM 31 / CCUG 7414 / JCM 2152 / NBRC 15305 / NCIMB 9373 / NCTC 2599 / NRRL B-3711</strain>
    </source>
</reference>
<organism>
    <name type="scientific">Bacillus cereus (strain ATCC 14579 / DSM 31 / CCUG 7414 / JCM 2152 / NBRC 15305 / NCIMB 9373 / NCTC 2599 / NRRL B-3711)</name>
    <dbReference type="NCBI Taxonomy" id="226900"/>
    <lineage>
        <taxon>Bacteria</taxon>
        <taxon>Bacillati</taxon>
        <taxon>Bacillota</taxon>
        <taxon>Bacilli</taxon>
        <taxon>Bacillales</taxon>
        <taxon>Bacillaceae</taxon>
        <taxon>Bacillus</taxon>
        <taxon>Bacillus cereus group</taxon>
    </lineage>
</organism>
<keyword id="KW-1185">Reference proteome</keyword>
<keyword id="KW-0749">Sporulation</keyword>
<keyword id="KW-1277">Toxin-antitoxin system</keyword>
<proteinExistence type="evidence at protein level"/>
<gene>
    <name type="primary">spoIISB</name>
    <name type="ordered locus">BC_2437</name>
</gene>
<evidence type="ECO:0000269" key="1">
    <source>
    </source>
</evidence>
<evidence type="ECO:0000305" key="2"/>
<accession>Q81DD0</accession>
<dbReference type="EMBL" id="AE016877">
    <property type="protein sequence ID" value="AAP09400.1"/>
    <property type="molecule type" value="Genomic_DNA"/>
</dbReference>
<dbReference type="RefSeq" id="NP_832199.1">
    <property type="nucleotide sequence ID" value="NC_004722.1"/>
</dbReference>
<dbReference type="RefSeq" id="WP_000852629.1">
    <property type="nucleotide sequence ID" value="NZ_CP138336.1"/>
</dbReference>
<dbReference type="SMR" id="Q81DD0"/>
<dbReference type="STRING" id="226900.BC_2437"/>
<dbReference type="KEGG" id="bce:BC2437"/>
<dbReference type="PATRIC" id="fig|226900.8.peg.2467"/>
<dbReference type="HOGENOM" id="CLU_198764_0_0_9"/>
<dbReference type="OrthoDB" id="2906522at2"/>
<dbReference type="Proteomes" id="UP000001417">
    <property type="component" value="Chromosome"/>
</dbReference>
<dbReference type="GO" id="GO:0030435">
    <property type="term" value="P:sporulation resulting in formation of a cellular spore"/>
    <property type="evidence" value="ECO:0007669"/>
    <property type="project" value="UniProtKB-KW"/>
</dbReference>
<dbReference type="InterPro" id="IPR048199">
    <property type="entry name" value="SpoIISB-like"/>
</dbReference>
<dbReference type="NCBIfam" id="NF041469">
    <property type="entry name" value="spor_prot_SB"/>
    <property type="match status" value="1"/>
</dbReference>
<feature type="chain" id="PRO_0000415546" description="Stage II sporulation protein SB">
    <location>
        <begin position="1"/>
        <end position="58"/>
    </location>
</feature>
<sequence>MAEVNVQKSSFFKEKKEESNTDFSLVKGALTENINRLEKLMNNSSSKYIQVKRTKENA</sequence>